<keyword id="KW-0021">Allosteric enzyme</keyword>
<keyword id="KW-0067">ATP-binding</keyword>
<keyword id="KW-0119">Carbohydrate metabolism</keyword>
<keyword id="KW-0320">Glycogen biosynthesis</keyword>
<keyword id="KW-0321">Glycogen metabolism</keyword>
<keyword id="KW-0547">Nucleotide-binding</keyword>
<keyword id="KW-0548">Nucleotidyltransferase</keyword>
<keyword id="KW-1185">Reference proteome</keyword>
<keyword id="KW-0808">Transferase</keyword>
<name>GLGC_ECO45</name>
<evidence type="ECO:0000255" key="1">
    <source>
        <dbReference type="HAMAP-Rule" id="MF_00624"/>
    </source>
</evidence>
<gene>
    <name evidence="1" type="primary">glgC</name>
    <name type="ordered locus">ECS88_3828</name>
</gene>
<accession>B7MDR5</accession>
<sequence length="431" mass="48668">MVSLEKNDHLMLARQLPLKSVALILAGGRGTRLKDLTNKRAKPAVHFGGKFRIIDFALSNCINSGIRRMGVITQYQSHTLVQHIQRGWSFFNEEMNEFVDLLPAQQRMKGENWYRGTADAVTQNLDIIRRYKAEYVVILAGDHIYKQDYSRMLIDHVEKGARCTVACMPVPIEEASAFGVMAVDENDKIIEFVEKPANPPSMPNDPGKSLASMGIYVFDADYLYELLEEDDRDENSSHDFGKDLIPKITEAGLAYAHPFPLSCVQSDPDAEPYWRDVGTLEAYWKANLDLASVVPELDMYDRNWPIRTYNESLPPAKFVQDRSGSHGMTLNSLVSGGCVISGSVVVQSVLFSRVRVNSFCNIDSAVLLPEVWVGRSCRLRRCVIDRACVIPEGMVIGENAEEDARRFYRSEEGIVLVTREMLRKLGHKQER</sequence>
<comment type="function">
    <text evidence="1">Involved in the biosynthesis of ADP-glucose, a building block required for the elongation reactions to produce glycogen. Catalyzes the reaction between ATP and alpha-D-glucose 1-phosphate (G1P) to produce pyrophosphate and ADP-Glc.</text>
</comment>
<comment type="catalytic activity">
    <reaction evidence="1">
        <text>alpha-D-glucose 1-phosphate + ATP + H(+) = ADP-alpha-D-glucose + diphosphate</text>
        <dbReference type="Rhea" id="RHEA:12120"/>
        <dbReference type="ChEBI" id="CHEBI:15378"/>
        <dbReference type="ChEBI" id="CHEBI:30616"/>
        <dbReference type="ChEBI" id="CHEBI:33019"/>
        <dbReference type="ChEBI" id="CHEBI:57498"/>
        <dbReference type="ChEBI" id="CHEBI:58601"/>
        <dbReference type="EC" id="2.7.7.27"/>
    </reaction>
</comment>
<comment type="activity regulation">
    <text evidence="1">Allosterically activated by fructose-1,6-bisphosphate (F16BP) and inhibited by AMP.</text>
</comment>
<comment type="pathway">
    <text evidence="1">Glycan biosynthesis; glycogen biosynthesis.</text>
</comment>
<comment type="subunit">
    <text evidence="1">Homotetramer.</text>
</comment>
<comment type="similarity">
    <text evidence="1">Belongs to the bacterial/plant glucose-1-phosphate adenylyltransferase family.</text>
</comment>
<organism>
    <name type="scientific">Escherichia coli O45:K1 (strain S88 / ExPEC)</name>
    <dbReference type="NCBI Taxonomy" id="585035"/>
    <lineage>
        <taxon>Bacteria</taxon>
        <taxon>Pseudomonadati</taxon>
        <taxon>Pseudomonadota</taxon>
        <taxon>Gammaproteobacteria</taxon>
        <taxon>Enterobacterales</taxon>
        <taxon>Enterobacteriaceae</taxon>
        <taxon>Escherichia</taxon>
    </lineage>
</organism>
<proteinExistence type="inferred from homology"/>
<protein>
    <recommendedName>
        <fullName evidence="1">Glucose-1-phosphate adenylyltransferase</fullName>
        <ecNumber evidence="1">2.7.7.27</ecNumber>
    </recommendedName>
    <alternativeName>
        <fullName evidence="1">ADP-glucose pyrophosphorylase</fullName>
        <shortName evidence="1">ADPGlc PPase</shortName>
    </alternativeName>
    <alternativeName>
        <fullName evidence="1">ADP-glucose synthase</fullName>
    </alternativeName>
</protein>
<feature type="chain" id="PRO_1000130475" description="Glucose-1-phosphate adenylyltransferase">
    <location>
        <begin position="1"/>
        <end position="431"/>
    </location>
</feature>
<feature type="binding site" evidence="1">
    <location>
        <position position="39"/>
    </location>
    <ligand>
        <name>beta-D-fructose 1,6-bisphosphate</name>
        <dbReference type="ChEBI" id="CHEBI:32966"/>
    </ligand>
</feature>
<feature type="binding site" evidence="1">
    <location>
        <position position="40"/>
    </location>
    <ligand>
        <name>AMP</name>
        <dbReference type="ChEBI" id="CHEBI:456215"/>
    </ligand>
</feature>
<feature type="binding site" evidence="1">
    <location>
        <position position="46"/>
    </location>
    <ligand>
        <name>AMP</name>
        <dbReference type="ChEBI" id="CHEBI:456215"/>
    </ligand>
</feature>
<feature type="binding site" evidence="1">
    <location>
        <position position="52"/>
    </location>
    <ligand>
        <name>AMP</name>
        <dbReference type="ChEBI" id="CHEBI:456215"/>
    </ligand>
</feature>
<feature type="binding site" evidence="1">
    <location>
        <position position="114"/>
    </location>
    <ligand>
        <name>alpha-D-glucose 1-phosphate</name>
        <dbReference type="ChEBI" id="CHEBI:58601"/>
    </ligand>
</feature>
<feature type="binding site" evidence="1">
    <location>
        <position position="130"/>
    </location>
    <ligand>
        <name>AMP</name>
        <dbReference type="ChEBI" id="CHEBI:456215"/>
    </ligand>
</feature>
<feature type="binding site" evidence="1">
    <location>
        <position position="179"/>
    </location>
    <ligand>
        <name>alpha-D-glucose 1-phosphate</name>
        <dbReference type="ChEBI" id="CHEBI:58601"/>
    </ligand>
</feature>
<feature type="binding site" evidence="1">
    <location>
        <begin position="194"/>
        <end position="195"/>
    </location>
    <ligand>
        <name>alpha-D-glucose 1-phosphate</name>
        <dbReference type="ChEBI" id="CHEBI:58601"/>
    </ligand>
</feature>
<feature type="binding site" evidence="1">
    <location>
        <position position="212"/>
    </location>
    <ligand>
        <name>alpha-D-glucose 1-phosphate</name>
        <dbReference type="ChEBI" id="CHEBI:58601"/>
    </ligand>
</feature>
<feature type="binding site" evidence="1">
    <location>
        <position position="370"/>
    </location>
    <ligand>
        <name>AMP</name>
        <dbReference type="ChEBI" id="CHEBI:456215"/>
    </ligand>
</feature>
<feature type="binding site" evidence="1">
    <location>
        <position position="386"/>
    </location>
    <ligand>
        <name>AMP</name>
        <dbReference type="ChEBI" id="CHEBI:456215"/>
    </ligand>
</feature>
<feature type="binding site" evidence="1">
    <location>
        <begin position="419"/>
        <end position="423"/>
    </location>
    <ligand>
        <name>beta-D-fructose 1,6-bisphosphate</name>
        <dbReference type="ChEBI" id="CHEBI:32966"/>
    </ligand>
</feature>
<feature type="binding site" evidence="1">
    <location>
        <begin position="429"/>
        <end position="431"/>
    </location>
    <ligand>
        <name>beta-D-fructose 1,6-bisphosphate</name>
        <dbReference type="ChEBI" id="CHEBI:32966"/>
    </ligand>
</feature>
<feature type="site" description="Could play a key role in the communication between the regulatory and the substrate sites" evidence="1">
    <location>
        <position position="74"/>
    </location>
</feature>
<feature type="site" description="Could play a key role in the communication between the regulatory and the substrate sites" evidence="1">
    <location>
        <position position="113"/>
    </location>
</feature>
<reference key="1">
    <citation type="journal article" date="2009" name="PLoS Genet.">
        <title>Organised genome dynamics in the Escherichia coli species results in highly diverse adaptive paths.</title>
        <authorList>
            <person name="Touchon M."/>
            <person name="Hoede C."/>
            <person name="Tenaillon O."/>
            <person name="Barbe V."/>
            <person name="Baeriswyl S."/>
            <person name="Bidet P."/>
            <person name="Bingen E."/>
            <person name="Bonacorsi S."/>
            <person name="Bouchier C."/>
            <person name="Bouvet O."/>
            <person name="Calteau A."/>
            <person name="Chiapello H."/>
            <person name="Clermont O."/>
            <person name="Cruveiller S."/>
            <person name="Danchin A."/>
            <person name="Diard M."/>
            <person name="Dossat C."/>
            <person name="Karoui M.E."/>
            <person name="Frapy E."/>
            <person name="Garry L."/>
            <person name="Ghigo J.M."/>
            <person name="Gilles A.M."/>
            <person name="Johnson J."/>
            <person name="Le Bouguenec C."/>
            <person name="Lescat M."/>
            <person name="Mangenot S."/>
            <person name="Martinez-Jehanne V."/>
            <person name="Matic I."/>
            <person name="Nassif X."/>
            <person name="Oztas S."/>
            <person name="Petit M.A."/>
            <person name="Pichon C."/>
            <person name="Rouy Z."/>
            <person name="Ruf C.S."/>
            <person name="Schneider D."/>
            <person name="Tourret J."/>
            <person name="Vacherie B."/>
            <person name="Vallenet D."/>
            <person name="Medigue C."/>
            <person name="Rocha E.P.C."/>
            <person name="Denamur E."/>
        </authorList>
    </citation>
    <scope>NUCLEOTIDE SEQUENCE [LARGE SCALE GENOMIC DNA]</scope>
    <source>
        <strain>S88 / ExPEC</strain>
    </source>
</reference>
<dbReference type="EC" id="2.7.7.27" evidence="1"/>
<dbReference type="EMBL" id="CU928161">
    <property type="protein sequence ID" value="CAR05040.1"/>
    <property type="molecule type" value="Genomic_DNA"/>
</dbReference>
<dbReference type="RefSeq" id="WP_000253971.1">
    <property type="nucleotide sequence ID" value="NC_011742.1"/>
</dbReference>
<dbReference type="SMR" id="B7MDR5"/>
<dbReference type="KEGG" id="ecz:ECS88_3828"/>
<dbReference type="HOGENOM" id="CLU_029499_14_1_6"/>
<dbReference type="UniPathway" id="UPA00164"/>
<dbReference type="Proteomes" id="UP000000747">
    <property type="component" value="Chromosome"/>
</dbReference>
<dbReference type="GO" id="GO:0005524">
    <property type="term" value="F:ATP binding"/>
    <property type="evidence" value="ECO:0007669"/>
    <property type="project" value="UniProtKB-KW"/>
</dbReference>
<dbReference type="GO" id="GO:0008878">
    <property type="term" value="F:glucose-1-phosphate adenylyltransferase activity"/>
    <property type="evidence" value="ECO:0007669"/>
    <property type="project" value="UniProtKB-UniRule"/>
</dbReference>
<dbReference type="GO" id="GO:0005978">
    <property type="term" value="P:glycogen biosynthetic process"/>
    <property type="evidence" value="ECO:0007669"/>
    <property type="project" value="UniProtKB-UniRule"/>
</dbReference>
<dbReference type="CDD" id="cd02508">
    <property type="entry name" value="ADP_Glucose_PP"/>
    <property type="match status" value="1"/>
</dbReference>
<dbReference type="CDD" id="cd04651">
    <property type="entry name" value="LbH_G1P_AT_C"/>
    <property type="match status" value="1"/>
</dbReference>
<dbReference type="FunFam" id="2.160.10.10:FF:000006">
    <property type="entry name" value="Glucose-1-phosphate adenylyltransferase"/>
    <property type="match status" value="1"/>
</dbReference>
<dbReference type="FunFam" id="3.90.550.10:FF:000014">
    <property type="entry name" value="Glucose-1-phosphate adenylyltransferase"/>
    <property type="match status" value="1"/>
</dbReference>
<dbReference type="Gene3D" id="2.160.10.10">
    <property type="entry name" value="Hexapeptide repeat proteins"/>
    <property type="match status" value="1"/>
</dbReference>
<dbReference type="Gene3D" id="3.90.550.10">
    <property type="entry name" value="Spore Coat Polysaccharide Biosynthesis Protein SpsA, Chain A"/>
    <property type="match status" value="1"/>
</dbReference>
<dbReference type="HAMAP" id="MF_00624">
    <property type="entry name" value="GlgC"/>
    <property type="match status" value="1"/>
</dbReference>
<dbReference type="InterPro" id="IPR011831">
    <property type="entry name" value="ADP-Glc_PPase"/>
</dbReference>
<dbReference type="InterPro" id="IPR005836">
    <property type="entry name" value="ADP_Glu_pyroP_CS"/>
</dbReference>
<dbReference type="InterPro" id="IPR023049">
    <property type="entry name" value="GlgC_bac"/>
</dbReference>
<dbReference type="InterPro" id="IPR056818">
    <property type="entry name" value="GlmU/GlgC-like_hexapep"/>
</dbReference>
<dbReference type="InterPro" id="IPR005835">
    <property type="entry name" value="NTP_transferase_dom"/>
</dbReference>
<dbReference type="InterPro" id="IPR029044">
    <property type="entry name" value="Nucleotide-diphossugar_trans"/>
</dbReference>
<dbReference type="InterPro" id="IPR011004">
    <property type="entry name" value="Trimer_LpxA-like_sf"/>
</dbReference>
<dbReference type="NCBIfam" id="TIGR02091">
    <property type="entry name" value="glgC"/>
    <property type="match status" value="1"/>
</dbReference>
<dbReference type="NCBIfam" id="NF001947">
    <property type="entry name" value="PRK00725.1"/>
    <property type="match status" value="1"/>
</dbReference>
<dbReference type="NCBIfam" id="NF002023">
    <property type="entry name" value="PRK00844.1"/>
    <property type="match status" value="1"/>
</dbReference>
<dbReference type="PANTHER" id="PTHR43523:SF2">
    <property type="entry name" value="GLUCOSE-1-PHOSPHATE ADENYLYLTRANSFERASE"/>
    <property type="match status" value="1"/>
</dbReference>
<dbReference type="PANTHER" id="PTHR43523">
    <property type="entry name" value="GLUCOSE-1-PHOSPHATE ADENYLYLTRANSFERASE-RELATED"/>
    <property type="match status" value="1"/>
</dbReference>
<dbReference type="Pfam" id="PF24894">
    <property type="entry name" value="Hexapep_GlmU"/>
    <property type="match status" value="1"/>
</dbReference>
<dbReference type="Pfam" id="PF00483">
    <property type="entry name" value="NTP_transferase"/>
    <property type="match status" value="1"/>
</dbReference>
<dbReference type="SUPFAM" id="SSF53448">
    <property type="entry name" value="Nucleotide-diphospho-sugar transferases"/>
    <property type="match status" value="1"/>
</dbReference>
<dbReference type="SUPFAM" id="SSF51161">
    <property type="entry name" value="Trimeric LpxA-like enzymes"/>
    <property type="match status" value="1"/>
</dbReference>
<dbReference type="PROSITE" id="PS00808">
    <property type="entry name" value="ADP_GLC_PYROPHOSPH_1"/>
    <property type="match status" value="1"/>
</dbReference>
<dbReference type="PROSITE" id="PS00809">
    <property type="entry name" value="ADP_GLC_PYROPHOSPH_2"/>
    <property type="match status" value="1"/>
</dbReference>
<dbReference type="PROSITE" id="PS00810">
    <property type="entry name" value="ADP_GLC_PYROPHOSPH_3"/>
    <property type="match status" value="1"/>
</dbReference>